<accession>B0U2F2</accession>
<dbReference type="EC" id="5.4.2.11" evidence="1"/>
<dbReference type="EMBL" id="CP000941">
    <property type="protein sequence ID" value="ACA12031.1"/>
    <property type="molecule type" value="Genomic_DNA"/>
</dbReference>
<dbReference type="RefSeq" id="WP_004085414.1">
    <property type="nucleotide sequence ID" value="NC_010513.1"/>
</dbReference>
<dbReference type="SMR" id="B0U2F2"/>
<dbReference type="KEGG" id="xfm:Xfasm12_1072"/>
<dbReference type="HOGENOM" id="CLU_033323_1_1_6"/>
<dbReference type="UniPathway" id="UPA00109">
    <property type="reaction ID" value="UER00186"/>
</dbReference>
<dbReference type="GO" id="GO:0004619">
    <property type="term" value="F:phosphoglycerate mutase activity"/>
    <property type="evidence" value="ECO:0007669"/>
    <property type="project" value="UniProtKB-EC"/>
</dbReference>
<dbReference type="GO" id="GO:0006094">
    <property type="term" value="P:gluconeogenesis"/>
    <property type="evidence" value="ECO:0007669"/>
    <property type="project" value="UniProtKB-UniRule"/>
</dbReference>
<dbReference type="GO" id="GO:0006096">
    <property type="term" value="P:glycolytic process"/>
    <property type="evidence" value="ECO:0007669"/>
    <property type="project" value="UniProtKB-UniRule"/>
</dbReference>
<dbReference type="CDD" id="cd07067">
    <property type="entry name" value="HP_PGM_like"/>
    <property type="match status" value="1"/>
</dbReference>
<dbReference type="FunFam" id="3.40.50.1240:FF:000003">
    <property type="entry name" value="2,3-bisphosphoglycerate-dependent phosphoglycerate mutase"/>
    <property type="match status" value="1"/>
</dbReference>
<dbReference type="Gene3D" id="3.40.50.1240">
    <property type="entry name" value="Phosphoglycerate mutase-like"/>
    <property type="match status" value="1"/>
</dbReference>
<dbReference type="HAMAP" id="MF_01039">
    <property type="entry name" value="PGAM_GpmA"/>
    <property type="match status" value="1"/>
</dbReference>
<dbReference type="InterPro" id="IPR013078">
    <property type="entry name" value="His_Pase_superF_clade-1"/>
</dbReference>
<dbReference type="InterPro" id="IPR029033">
    <property type="entry name" value="His_PPase_superfam"/>
</dbReference>
<dbReference type="InterPro" id="IPR001345">
    <property type="entry name" value="PG/BPGM_mutase_AS"/>
</dbReference>
<dbReference type="InterPro" id="IPR005952">
    <property type="entry name" value="Phosphogly_mut1"/>
</dbReference>
<dbReference type="NCBIfam" id="TIGR01258">
    <property type="entry name" value="pgm_1"/>
    <property type="match status" value="1"/>
</dbReference>
<dbReference type="NCBIfam" id="NF010713">
    <property type="entry name" value="PRK14115.1"/>
    <property type="match status" value="1"/>
</dbReference>
<dbReference type="PANTHER" id="PTHR11931">
    <property type="entry name" value="PHOSPHOGLYCERATE MUTASE"/>
    <property type="match status" value="1"/>
</dbReference>
<dbReference type="Pfam" id="PF00300">
    <property type="entry name" value="His_Phos_1"/>
    <property type="match status" value="1"/>
</dbReference>
<dbReference type="PIRSF" id="PIRSF000709">
    <property type="entry name" value="6PFK_2-Ptase"/>
    <property type="match status" value="1"/>
</dbReference>
<dbReference type="SMART" id="SM00855">
    <property type="entry name" value="PGAM"/>
    <property type="match status" value="1"/>
</dbReference>
<dbReference type="SUPFAM" id="SSF53254">
    <property type="entry name" value="Phosphoglycerate mutase-like"/>
    <property type="match status" value="1"/>
</dbReference>
<dbReference type="PROSITE" id="PS00175">
    <property type="entry name" value="PG_MUTASE"/>
    <property type="match status" value="1"/>
</dbReference>
<gene>
    <name evidence="1" type="primary">gpmA</name>
    <name type="ordered locus">Xfasm12_1072</name>
</gene>
<comment type="function">
    <text evidence="1">Catalyzes the interconversion of 2-phosphoglycerate and 3-phosphoglycerate.</text>
</comment>
<comment type="catalytic activity">
    <reaction evidence="1">
        <text>(2R)-2-phosphoglycerate = (2R)-3-phosphoglycerate</text>
        <dbReference type="Rhea" id="RHEA:15901"/>
        <dbReference type="ChEBI" id="CHEBI:58272"/>
        <dbReference type="ChEBI" id="CHEBI:58289"/>
        <dbReference type="EC" id="5.4.2.11"/>
    </reaction>
</comment>
<comment type="pathway">
    <text evidence="1">Carbohydrate degradation; glycolysis; pyruvate from D-glyceraldehyde 3-phosphate: step 3/5.</text>
</comment>
<comment type="subunit">
    <text evidence="1">Homodimer.</text>
</comment>
<comment type="similarity">
    <text evidence="1">Belongs to the phosphoglycerate mutase family. BPG-dependent PGAM subfamily.</text>
</comment>
<reference key="1">
    <citation type="journal article" date="2010" name="J. Bacteriol.">
        <title>Whole genome sequences of two Xylella fastidiosa strains (M12 and M23) causing almond leaf scorch disease in California.</title>
        <authorList>
            <person name="Chen J."/>
            <person name="Xie G."/>
            <person name="Han S."/>
            <person name="Chertkov O."/>
            <person name="Sims D."/>
            <person name="Civerolo E.L."/>
        </authorList>
    </citation>
    <scope>NUCLEOTIDE SEQUENCE [LARGE SCALE GENOMIC DNA]</scope>
    <source>
        <strain>M12</strain>
    </source>
</reference>
<feature type="chain" id="PRO_1000135995" description="2,3-bisphosphoglycerate-dependent phosphoglycerate mutase">
    <location>
        <begin position="1"/>
        <end position="249"/>
    </location>
</feature>
<feature type="active site" description="Tele-phosphohistidine intermediate" evidence="1">
    <location>
        <position position="10"/>
    </location>
</feature>
<feature type="active site" description="Proton donor/acceptor" evidence="1">
    <location>
        <position position="88"/>
    </location>
</feature>
<feature type="binding site" evidence="1">
    <location>
        <begin position="9"/>
        <end position="16"/>
    </location>
    <ligand>
        <name>substrate</name>
    </ligand>
</feature>
<feature type="binding site" evidence="1">
    <location>
        <begin position="22"/>
        <end position="23"/>
    </location>
    <ligand>
        <name>substrate</name>
    </ligand>
</feature>
<feature type="binding site" evidence="1">
    <location>
        <position position="61"/>
    </location>
    <ligand>
        <name>substrate</name>
    </ligand>
</feature>
<feature type="binding site" evidence="1">
    <location>
        <begin position="88"/>
        <end position="91"/>
    </location>
    <ligand>
        <name>substrate</name>
    </ligand>
</feature>
<feature type="binding site" evidence="1">
    <location>
        <position position="99"/>
    </location>
    <ligand>
        <name>substrate</name>
    </ligand>
</feature>
<feature type="binding site" evidence="1">
    <location>
        <begin position="115"/>
        <end position="116"/>
    </location>
    <ligand>
        <name>substrate</name>
    </ligand>
</feature>
<feature type="binding site" evidence="1">
    <location>
        <begin position="184"/>
        <end position="185"/>
    </location>
    <ligand>
        <name>substrate</name>
    </ligand>
</feature>
<feature type="site" description="Transition state stabilizer" evidence="1">
    <location>
        <position position="183"/>
    </location>
</feature>
<proteinExistence type="inferred from homology"/>
<sequence length="249" mass="28458">MTRKLVLLRHGQSQWNSMNRFTGWVDIGLTEQGHQEATMAGHLMKEEGLEFDVAHTSLLKRAIHTLQDALKALDQDWLPIYKSWRLNERHYGALQGLDKIDTAAKHGEEQVNIWRRSYDIQPPPIDLDDPSHPMRDRRYAALDRKVLPVTESLKNTLERVLPYWNDAIAPQLNDNKTVLISAHGNSLRALYKYLNQESDEKILNVNIPTGIPLLFELSDTLQVVSYRYLGDPDAAQRAAEMVANQGKAK</sequence>
<protein>
    <recommendedName>
        <fullName evidence="1">2,3-bisphosphoglycerate-dependent phosphoglycerate mutase</fullName>
        <shortName evidence="1">BPG-dependent PGAM</shortName>
        <shortName evidence="1">PGAM</shortName>
        <shortName evidence="1">Phosphoglyceromutase</shortName>
        <shortName evidence="1">dPGM</shortName>
        <ecNumber evidence="1">5.4.2.11</ecNumber>
    </recommendedName>
</protein>
<organism>
    <name type="scientific">Xylella fastidiosa (strain M12)</name>
    <dbReference type="NCBI Taxonomy" id="405440"/>
    <lineage>
        <taxon>Bacteria</taxon>
        <taxon>Pseudomonadati</taxon>
        <taxon>Pseudomonadota</taxon>
        <taxon>Gammaproteobacteria</taxon>
        <taxon>Lysobacterales</taxon>
        <taxon>Lysobacteraceae</taxon>
        <taxon>Xylella</taxon>
    </lineage>
</organism>
<keyword id="KW-0312">Gluconeogenesis</keyword>
<keyword id="KW-0324">Glycolysis</keyword>
<keyword id="KW-0413">Isomerase</keyword>
<name>GPMA_XYLFM</name>
<evidence type="ECO:0000255" key="1">
    <source>
        <dbReference type="HAMAP-Rule" id="MF_01039"/>
    </source>
</evidence>